<accession>B7VLF6</accession>
<protein>
    <recommendedName>
        <fullName evidence="1">Large ribosomal subunit protein uL4</fullName>
    </recommendedName>
    <alternativeName>
        <fullName evidence="3">50S ribosomal protein L4</fullName>
    </alternativeName>
</protein>
<reference key="1">
    <citation type="submission" date="2009-02" db="EMBL/GenBank/DDBJ databases">
        <title>Vibrio splendidus str. LGP32 complete genome.</title>
        <authorList>
            <person name="Mazel D."/>
            <person name="Le Roux F."/>
        </authorList>
    </citation>
    <scope>NUCLEOTIDE SEQUENCE [LARGE SCALE GENOMIC DNA]</scope>
    <source>
        <strain>LGP32</strain>
    </source>
</reference>
<keyword id="KW-0687">Ribonucleoprotein</keyword>
<keyword id="KW-0689">Ribosomal protein</keyword>
<keyword id="KW-0694">RNA-binding</keyword>
<keyword id="KW-0699">rRNA-binding</keyword>
<name>RL4_VIBA3</name>
<gene>
    <name evidence="1" type="primary">rplD</name>
    <name type="ordered locus">VS_2831</name>
</gene>
<feature type="chain" id="PRO_1000166035" description="Large ribosomal subunit protein uL4">
    <location>
        <begin position="1"/>
        <end position="200"/>
    </location>
</feature>
<feature type="region of interest" description="Disordered" evidence="2">
    <location>
        <begin position="42"/>
        <end position="65"/>
    </location>
</feature>
<proteinExistence type="inferred from homology"/>
<evidence type="ECO:0000255" key="1">
    <source>
        <dbReference type="HAMAP-Rule" id="MF_01328"/>
    </source>
</evidence>
<evidence type="ECO:0000256" key="2">
    <source>
        <dbReference type="SAM" id="MobiDB-lite"/>
    </source>
</evidence>
<evidence type="ECO:0000305" key="3"/>
<dbReference type="EMBL" id="FM954972">
    <property type="protein sequence ID" value="CAV20124.1"/>
    <property type="molecule type" value="Genomic_DNA"/>
</dbReference>
<dbReference type="SMR" id="B7VLF6"/>
<dbReference type="STRING" id="575788.VS_2831"/>
<dbReference type="KEGG" id="vsp:VS_2831"/>
<dbReference type="eggNOG" id="COG0088">
    <property type="taxonomic scope" value="Bacteria"/>
</dbReference>
<dbReference type="HOGENOM" id="CLU_041575_5_2_6"/>
<dbReference type="Proteomes" id="UP000009100">
    <property type="component" value="Chromosome 1"/>
</dbReference>
<dbReference type="GO" id="GO:1990904">
    <property type="term" value="C:ribonucleoprotein complex"/>
    <property type="evidence" value="ECO:0007669"/>
    <property type="project" value="UniProtKB-KW"/>
</dbReference>
<dbReference type="GO" id="GO:0005840">
    <property type="term" value="C:ribosome"/>
    <property type="evidence" value="ECO:0007669"/>
    <property type="project" value="UniProtKB-KW"/>
</dbReference>
<dbReference type="GO" id="GO:0019843">
    <property type="term" value="F:rRNA binding"/>
    <property type="evidence" value="ECO:0007669"/>
    <property type="project" value="UniProtKB-UniRule"/>
</dbReference>
<dbReference type="GO" id="GO:0003735">
    <property type="term" value="F:structural constituent of ribosome"/>
    <property type="evidence" value="ECO:0007669"/>
    <property type="project" value="InterPro"/>
</dbReference>
<dbReference type="GO" id="GO:0006412">
    <property type="term" value="P:translation"/>
    <property type="evidence" value="ECO:0007669"/>
    <property type="project" value="UniProtKB-UniRule"/>
</dbReference>
<dbReference type="FunFam" id="3.40.1370.10:FF:000001">
    <property type="entry name" value="50S ribosomal protein L4"/>
    <property type="match status" value="1"/>
</dbReference>
<dbReference type="Gene3D" id="3.40.1370.10">
    <property type="match status" value="1"/>
</dbReference>
<dbReference type="HAMAP" id="MF_01328_B">
    <property type="entry name" value="Ribosomal_uL4_B"/>
    <property type="match status" value="1"/>
</dbReference>
<dbReference type="InterPro" id="IPR002136">
    <property type="entry name" value="Ribosomal_uL4"/>
</dbReference>
<dbReference type="InterPro" id="IPR013005">
    <property type="entry name" value="Ribosomal_uL4-like"/>
</dbReference>
<dbReference type="InterPro" id="IPR023574">
    <property type="entry name" value="Ribosomal_uL4_dom_sf"/>
</dbReference>
<dbReference type="NCBIfam" id="TIGR03953">
    <property type="entry name" value="rplD_bact"/>
    <property type="match status" value="1"/>
</dbReference>
<dbReference type="PANTHER" id="PTHR10746">
    <property type="entry name" value="50S RIBOSOMAL PROTEIN L4"/>
    <property type="match status" value="1"/>
</dbReference>
<dbReference type="PANTHER" id="PTHR10746:SF6">
    <property type="entry name" value="LARGE RIBOSOMAL SUBUNIT PROTEIN UL4M"/>
    <property type="match status" value="1"/>
</dbReference>
<dbReference type="Pfam" id="PF00573">
    <property type="entry name" value="Ribosomal_L4"/>
    <property type="match status" value="1"/>
</dbReference>
<dbReference type="SUPFAM" id="SSF52166">
    <property type="entry name" value="Ribosomal protein L4"/>
    <property type="match status" value="1"/>
</dbReference>
<sequence length="200" mass="21885">MELMVKGADALTVSETTFGRDFNEALVHQVVVAYAAGARQGTRAQKTRSEVSGGGAKPWRQKGTGRARAGTIRSPIWRTGGVTFAAKPQDHSQKVNKKMYRGAMKSILSELIRQERLIVVDNFSVEAPKTKELVAKLKELELNDVLIVTGEVDENLFLAARNLYKVDARDVAGVDPVSLIAFDKVLMTADAVKQVEEMLA</sequence>
<comment type="function">
    <text evidence="1">One of the primary rRNA binding proteins, this protein initially binds near the 5'-end of the 23S rRNA. It is important during the early stages of 50S assembly. It makes multiple contacts with different domains of the 23S rRNA in the assembled 50S subunit and ribosome.</text>
</comment>
<comment type="function">
    <text evidence="1">Forms part of the polypeptide exit tunnel.</text>
</comment>
<comment type="subunit">
    <text evidence="1">Part of the 50S ribosomal subunit.</text>
</comment>
<comment type="similarity">
    <text evidence="1">Belongs to the universal ribosomal protein uL4 family.</text>
</comment>
<organism>
    <name type="scientific">Vibrio atlanticus (strain LGP32)</name>
    <name type="common">Vibrio splendidus (strain Mel32)</name>
    <dbReference type="NCBI Taxonomy" id="575788"/>
    <lineage>
        <taxon>Bacteria</taxon>
        <taxon>Pseudomonadati</taxon>
        <taxon>Pseudomonadota</taxon>
        <taxon>Gammaproteobacteria</taxon>
        <taxon>Vibrionales</taxon>
        <taxon>Vibrionaceae</taxon>
        <taxon>Vibrio</taxon>
    </lineage>
</organism>